<sequence length="179" mass="18920">MNKSMLAGIGIGVAAALGVAAVASLNVFERGPQYAQVVSATPIKETVKTPRQECRNVTVTHRRPVQDENRITGSVLGAVAGGVIGHQFGGGRGKDVATVVGALGGGYAGNQIQGSLQESDTYTTTQQRCKTVYDKSEKMLGYDVTYKIGDQQGKIRMDRDPGTQIPLDSNGQLILNNKV</sequence>
<comment type="subcellular location">
    <subcellularLocation>
        <location evidence="2">Membrane</location>
        <topology evidence="2">Single-pass membrane protein</topology>
    </subcellularLocation>
</comment>
<comment type="similarity">
    <text evidence="2">To Rickettsia 17 kDa surface antigen.</text>
</comment>
<comment type="sequence caution" evidence="2">
    <conflict type="erroneous initiation">
        <sequence resource="EMBL-CDS" id="AAN79853"/>
    </conflict>
</comment>
<feature type="chain" id="PRO_0000168833" description="Uncharacterized protein YcfJ">
    <location>
        <begin position="1"/>
        <end position="179"/>
    </location>
</feature>
<feature type="transmembrane region" description="Helical" evidence="1">
    <location>
        <begin position="5"/>
        <end position="25"/>
    </location>
</feature>
<evidence type="ECO:0000255" key="1"/>
<evidence type="ECO:0000305" key="2"/>
<protein>
    <recommendedName>
        <fullName>Uncharacterized protein YcfJ</fullName>
    </recommendedName>
</protein>
<accession>P0AB36</accession>
<accession>P37796</accession>
<accession>P75951</accession>
<gene>
    <name type="primary">ycfJ</name>
    <name type="ordered locus">c1383</name>
</gene>
<dbReference type="EMBL" id="AE014075">
    <property type="protein sequence ID" value="AAN79853.1"/>
    <property type="status" value="ALT_INIT"/>
    <property type="molecule type" value="Genomic_DNA"/>
</dbReference>
<dbReference type="RefSeq" id="WP_001043459.1">
    <property type="nucleotide sequence ID" value="NZ_CP051263.1"/>
</dbReference>
<dbReference type="STRING" id="199310.c1383"/>
<dbReference type="KEGG" id="ecc:c1383"/>
<dbReference type="eggNOG" id="COG3134">
    <property type="taxonomic scope" value="Bacteria"/>
</dbReference>
<dbReference type="HOGENOM" id="CLU_094245_1_0_6"/>
<dbReference type="Proteomes" id="UP000001410">
    <property type="component" value="Chromosome"/>
</dbReference>
<dbReference type="GO" id="GO:0019867">
    <property type="term" value="C:outer membrane"/>
    <property type="evidence" value="ECO:0007669"/>
    <property type="project" value="InterPro"/>
</dbReference>
<dbReference type="InterPro" id="IPR051407">
    <property type="entry name" value="Bact_OM_lipoprot/Surf_antigen"/>
</dbReference>
<dbReference type="InterPro" id="IPR008816">
    <property type="entry name" value="Gly_zipper_2TM_dom"/>
</dbReference>
<dbReference type="NCBIfam" id="NF008437">
    <property type="entry name" value="PRK11280.1"/>
    <property type="match status" value="1"/>
</dbReference>
<dbReference type="PANTHER" id="PTHR35603">
    <property type="match status" value="1"/>
</dbReference>
<dbReference type="PANTHER" id="PTHR35603:SF2">
    <property type="entry name" value="OUTER MEMBRANE LIPOPROTEIN"/>
    <property type="match status" value="1"/>
</dbReference>
<dbReference type="Pfam" id="PF05433">
    <property type="entry name" value="Rick_17kDa_Anti"/>
    <property type="match status" value="1"/>
</dbReference>
<name>YCFJ_ECOL6</name>
<proteinExistence type="predicted"/>
<reference key="1">
    <citation type="journal article" date="2002" name="Proc. Natl. Acad. Sci. U.S.A.">
        <title>Extensive mosaic structure revealed by the complete genome sequence of uropathogenic Escherichia coli.</title>
        <authorList>
            <person name="Welch R.A."/>
            <person name="Burland V."/>
            <person name="Plunkett G. III"/>
            <person name="Redford P."/>
            <person name="Roesch P."/>
            <person name="Rasko D."/>
            <person name="Buckles E.L."/>
            <person name="Liou S.-R."/>
            <person name="Boutin A."/>
            <person name="Hackett J."/>
            <person name="Stroud D."/>
            <person name="Mayhew G.F."/>
            <person name="Rose D.J."/>
            <person name="Zhou S."/>
            <person name="Schwartz D.C."/>
            <person name="Perna N.T."/>
            <person name="Mobley H.L.T."/>
            <person name="Donnenberg M.S."/>
            <person name="Blattner F.R."/>
        </authorList>
    </citation>
    <scope>NUCLEOTIDE SEQUENCE [LARGE SCALE GENOMIC DNA]</scope>
    <source>
        <strain>CFT073 / ATCC 700928 / UPEC</strain>
    </source>
</reference>
<keyword id="KW-0472">Membrane</keyword>
<keyword id="KW-1185">Reference proteome</keyword>
<keyword id="KW-0812">Transmembrane</keyword>
<keyword id="KW-1133">Transmembrane helix</keyword>
<organism>
    <name type="scientific">Escherichia coli O6:H1 (strain CFT073 / ATCC 700928 / UPEC)</name>
    <dbReference type="NCBI Taxonomy" id="199310"/>
    <lineage>
        <taxon>Bacteria</taxon>
        <taxon>Pseudomonadati</taxon>
        <taxon>Pseudomonadota</taxon>
        <taxon>Gammaproteobacteria</taxon>
        <taxon>Enterobacterales</taxon>
        <taxon>Enterobacteriaceae</taxon>
        <taxon>Escherichia</taxon>
    </lineage>
</organism>